<comment type="function">
    <text evidence="1">This protein is one of the early assembly proteins of the 50S ribosomal subunit, although it is not seen to bind rRNA by itself. It is important during the early stages of 50S assembly.</text>
</comment>
<comment type="subunit">
    <text evidence="1">Part of the 50S ribosomal subunit.</text>
</comment>
<comment type="similarity">
    <text evidence="1">Belongs to the universal ribosomal protein uL13 family.</text>
</comment>
<organism>
    <name type="scientific">Natronomonas pharaonis (strain ATCC 35678 / DSM 2160 / CIP 103997 / JCM 8858 / NBRC 14720 / NCIMB 2260 / Gabara)</name>
    <name type="common">Halobacterium pharaonis</name>
    <dbReference type="NCBI Taxonomy" id="348780"/>
    <lineage>
        <taxon>Archaea</taxon>
        <taxon>Methanobacteriati</taxon>
        <taxon>Methanobacteriota</taxon>
        <taxon>Stenosarchaea group</taxon>
        <taxon>Halobacteria</taxon>
        <taxon>Halobacteriales</taxon>
        <taxon>Haloarculaceae</taxon>
        <taxon>Natronomonas</taxon>
    </lineage>
</organism>
<evidence type="ECO:0000255" key="1">
    <source>
        <dbReference type="HAMAP-Rule" id="MF_01366"/>
    </source>
</evidence>
<evidence type="ECO:0000305" key="2"/>
<feature type="chain" id="PRO_0000261846" description="Large ribosomal subunit protein uL13">
    <location>
        <begin position="1"/>
        <end position="144"/>
    </location>
</feature>
<name>RL13_NATPD</name>
<dbReference type="EMBL" id="CR936257">
    <property type="protein sequence ID" value="CAI49510.1"/>
    <property type="molecule type" value="Genomic_DNA"/>
</dbReference>
<dbReference type="RefSeq" id="WP_011323135.1">
    <property type="nucleotide sequence ID" value="NC_007426.1"/>
</dbReference>
<dbReference type="SMR" id="Q3IQT4"/>
<dbReference type="STRING" id="348780.NP_2838A"/>
<dbReference type="EnsemblBacteria" id="CAI49510">
    <property type="protein sequence ID" value="CAI49510"/>
    <property type="gene ID" value="NP_2838A"/>
</dbReference>
<dbReference type="GeneID" id="3703123"/>
<dbReference type="KEGG" id="nph:NP_2838A"/>
<dbReference type="eggNOG" id="arCOG04242">
    <property type="taxonomic scope" value="Archaea"/>
</dbReference>
<dbReference type="HOGENOM" id="CLU_076922_1_0_2"/>
<dbReference type="OrthoDB" id="7668at2157"/>
<dbReference type="Proteomes" id="UP000002698">
    <property type="component" value="Chromosome"/>
</dbReference>
<dbReference type="GO" id="GO:0022625">
    <property type="term" value="C:cytosolic large ribosomal subunit"/>
    <property type="evidence" value="ECO:0007669"/>
    <property type="project" value="TreeGrafter"/>
</dbReference>
<dbReference type="GO" id="GO:0003729">
    <property type="term" value="F:mRNA binding"/>
    <property type="evidence" value="ECO:0007669"/>
    <property type="project" value="TreeGrafter"/>
</dbReference>
<dbReference type="GO" id="GO:0003735">
    <property type="term" value="F:structural constituent of ribosome"/>
    <property type="evidence" value="ECO:0007669"/>
    <property type="project" value="InterPro"/>
</dbReference>
<dbReference type="GO" id="GO:0017148">
    <property type="term" value="P:negative regulation of translation"/>
    <property type="evidence" value="ECO:0007669"/>
    <property type="project" value="TreeGrafter"/>
</dbReference>
<dbReference type="GO" id="GO:0006412">
    <property type="term" value="P:translation"/>
    <property type="evidence" value="ECO:0007669"/>
    <property type="project" value="UniProtKB-UniRule"/>
</dbReference>
<dbReference type="CDD" id="cd00392">
    <property type="entry name" value="Ribosomal_L13"/>
    <property type="match status" value="1"/>
</dbReference>
<dbReference type="Gene3D" id="3.90.1180.10">
    <property type="entry name" value="Ribosomal protein L13"/>
    <property type="match status" value="1"/>
</dbReference>
<dbReference type="HAMAP" id="MF_01366">
    <property type="entry name" value="Ribosomal_uL13"/>
    <property type="match status" value="1"/>
</dbReference>
<dbReference type="InterPro" id="IPR005822">
    <property type="entry name" value="Ribosomal_uL13"/>
</dbReference>
<dbReference type="InterPro" id="IPR005823">
    <property type="entry name" value="Ribosomal_uL13_bac-type"/>
</dbReference>
<dbReference type="InterPro" id="IPR023563">
    <property type="entry name" value="Ribosomal_uL13_CS"/>
</dbReference>
<dbReference type="InterPro" id="IPR005755">
    <property type="entry name" value="Ribosomal_uL13_euk/arc"/>
</dbReference>
<dbReference type="InterPro" id="IPR036899">
    <property type="entry name" value="Ribosomal_uL13_sf"/>
</dbReference>
<dbReference type="NCBIfam" id="TIGR01077">
    <property type="entry name" value="L13_A_E"/>
    <property type="match status" value="1"/>
</dbReference>
<dbReference type="NCBIfam" id="NF005004">
    <property type="entry name" value="PRK06394.1"/>
    <property type="match status" value="1"/>
</dbReference>
<dbReference type="PANTHER" id="PTHR11545:SF3">
    <property type="entry name" value="LARGE RIBOSOMAL SUBUNIT PROTEIN UL13"/>
    <property type="match status" value="1"/>
</dbReference>
<dbReference type="PANTHER" id="PTHR11545">
    <property type="entry name" value="RIBOSOMAL PROTEIN L13"/>
    <property type="match status" value="1"/>
</dbReference>
<dbReference type="Pfam" id="PF00572">
    <property type="entry name" value="Ribosomal_L13"/>
    <property type="match status" value="1"/>
</dbReference>
<dbReference type="PIRSF" id="PIRSF002181">
    <property type="entry name" value="Ribosomal_L13"/>
    <property type="match status" value="1"/>
</dbReference>
<dbReference type="SUPFAM" id="SSF52161">
    <property type="entry name" value="Ribosomal protein L13"/>
    <property type="match status" value="1"/>
</dbReference>
<dbReference type="PROSITE" id="PS00783">
    <property type="entry name" value="RIBOSOMAL_L13"/>
    <property type="match status" value="1"/>
</dbReference>
<accession>Q3IQT4</accession>
<protein>
    <recommendedName>
        <fullName evidence="1">Large ribosomal subunit protein uL13</fullName>
    </recommendedName>
    <alternativeName>
        <fullName evidence="2">50S ribosomal protein L13</fullName>
    </alternativeName>
</protein>
<proteinExistence type="inferred from homology"/>
<gene>
    <name evidence="1" type="primary">rpl13</name>
    <name type="ordered locus">NP_2838A</name>
</gene>
<sequence length="144" mass="16294">MSYAEFDADVVIDARDCILGRVASQVAERALDGERIAVVNAEQAVITGSEDDIMEVYRKRDEVGSDRGPRYPKRPDRIFKRSVRGMLPYKTTRGREAFENVRIYMGNPYEEAEVLEDTSLDRLSNIKFVSLGEVSENLGANVTW</sequence>
<reference key="1">
    <citation type="journal article" date="2005" name="Genome Res.">
        <title>Living with two extremes: conclusions from the genome sequence of Natronomonas pharaonis.</title>
        <authorList>
            <person name="Falb M."/>
            <person name="Pfeiffer F."/>
            <person name="Palm P."/>
            <person name="Rodewald K."/>
            <person name="Hickmann V."/>
            <person name="Tittor J."/>
            <person name="Oesterhelt D."/>
        </authorList>
    </citation>
    <scope>NUCLEOTIDE SEQUENCE [LARGE SCALE GENOMIC DNA]</scope>
    <source>
        <strain>ATCC 35678 / DSM 2160 / CIP 103997 / JCM 8858 / NBRC 14720 / NCIMB 2260 / Gabara</strain>
    </source>
</reference>
<keyword id="KW-1185">Reference proteome</keyword>
<keyword id="KW-0687">Ribonucleoprotein</keyword>
<keyword id="KW-0689">Ribosomal protein</keyword>